<proteinExistence type="inferred from homology"/>
<name>SSRP_ALKMQ</name>
<gene>
    <name evidence="1" type="primary">smpB</name>
    <name type="ordered locus">Amet_3570</name>
</gene>
<keyword id="KW-0963">Cytoplasm</keyword>
<keyword id="KW-1185">Reference proteome</keyword>
<keyword id="KW-0694">RNA-binding</keyword>
<protein>
    <recommendedName>
        <fullName evidence="1">SsrA-binding protein</fullName>
    </recommendedName>
    <alternativeName>
        <fullName evidence="1">Small protein B</fullName>
    </alternativeName>
</protein>
<sequence>MAEKGQKSLAVNKKARFDYLIEDTFEAGMVLVGTEVKSIRQGKINIKEGYARIENSEIYLHNVHISPYEQGNIFNKDPLRIRKLLLHKAEIRKLIGYVQQKGYTLVPMKVYLQNGLVKLQLGVGVGKKLHDKRQDMAKKDSQRRIQKELGQRQKGME</sequence>
<accession>A6TU24</accession>
<evidence type="ECO:0000255" key="1">
    <source>
        <dbReference type="HAMAP-Rule" id="MF_00023"/>
    </source>
</evidence>
<evidence type="ECO:0000256" key="2">
    <source>
        <dbReference type="SAM" id="MobiDB-lite"/>
    </source>
</evidence>
<comment type="function">
    <text evidence="1">Required for rescue of stalled ribosomes mediated by trans-translation. Binds to transfer-messenger RNA (tmRNA), required for stable association of tmRNA with ribosomes. tmRNA and SmpB together mimic tRNA shape, replacing the anticodon stem-loop with SmpB. tmRNA is encoded by the ssrA gene; the 2 termini fold to resemble tRNA(Ala) and it encodes a 'tag peptide', a short internal open reading frame. During trans-translation Ala-aminoacylated tmRNA acts like a tRNA, entering the A-site of stalled ribosomes, displacing the stalled mRNA. The ribosome then switches to translate the ORF on the tmRNA; the nascent peptide is terminated with the 'tag peptide' encoded by the tmRNA and targeted for degradation. The ribosome is freed to recommence translation, which seems to be the essential function of trans-translation.</text>
</comment>
<comment type="subcellular location">
    <subcellularLocation>
        <location evidence="1">Cytoplasm</location>
    </subcellularLocation>
    <text evidence="1">The tmRNA-SmpB complex associates with stalled 70S ribosomes.</text>
</comment>
<comment type="similarity">
    <text evidence="1">Belongs to the SmpB family.</text>
</comment>
<dbReference type="EMBL" id="CP000724">
    <property type="protein sequence ID" value="ABR49692.1"/>
    <property type="molecule type" value="Genomic_DNA"/>
</dbReference>
<dbReference type="RefSeq" id="WP_012064652.1">
    <property type="nucleotide sequence ID" value="NC_009633.1"/>
</dbReference>
<dbReference type="SMR" id="A6TU24"/>
<dbReference type="STRING" id="293826.Amet_3570"/>
<dbReference type="KEGG" id="amt:Amet_3570"/>
<dbReference type="eggNOG" id="COG0691">
    <property type="taxonomic scope" value="Bacteria"/>
</dbReference>
<dbReference type="HOGENOM" id="CLU_108953_0_0_9"/>
<dbReference type="OrthoDB" id="9805462at2"/>
<dbReference type="Proteomes" id="UP000001572">
    <property type="component" value="Chromosome"/>
</dbReference>
<dbReference type="GO" id="GO:0005829">
    <property type="term" value="C:cytosol"/>
    <property type="evidence" value="ECO:0007669"/>
    <property type="project" value="TreeGrafter"/>
</dbReference>
<dbReference type="GO" id="GO:0003723">
    <property type="term" value="F:RNA binding"/>
    <property type="evidence" value="ECO:0007669"/>
    <property type="project" value="UniProtKB-UniRule"/>
</dbReference>
<dbReference type="GO" id="GO:0070929">
    <property type="term" value="P:trans-translation"/>
    <property type="evidence" value="ECO:0007669"/>
    <property type="project" value="UniProtKB-UniRule"/>
</dbReference>
<dbReference type="CDD" id="cd09294">
    <property type="entry name" value="SmpB"/>
    <property type="match status" value="1"/>
</dbReference>
<dbReference type="Gene3D" id="2.40.280.10">
    <property type="match status" value="1"/>
</dbReference>
<dbReference type="HAMAP" id="MF_00023">
    <property type="entry name" value="SmpB"/>
    <property type="match status" value="1"/>
</dbReference>
<dbReference type="InterPro" id="IPR023620">
    <property type="entry name" value="SmpB"/>
</dbReference>
<dbReference type="InterPro" id="IPR000037">
    <property type="entry name" value="SsrA-bd_prot"/>
</dbReference>
<dbReference type="InterPro" id="IPR020081">
    <property type="entry name" value="SsrA-bd_prot_CS"/>
</dbReference>
<dbReference type="NCBIfam" id="NF003843">
    <property type="entry name" value="PRK05422.1"/>
    <property type="match status" value="1"/>
</dbReference>
<dbReference type="NCBIfam" id="TIGR00086">
    <property type="entry name" value="smpB"/>
    <property type="match status" value="1"/>
</dbReference>
<dbReference type="PANTHER" id="PTHR30308:SF2">
    <property type="entry name" value="SSRA-BINDING PROTEIN"/>
    <property type="match status" value="1"/>
</dbReference>
<dbReference type="PANTHER" id="PTHR30308">
    <property type="entry name" value="TMRNA-BINDING COMPONENT OF TRANS-TRANSLATION TAGGING COMPLEX"/>
    <property type="match status" value="1"/>
</dbReference>
<dbReference type="Pfam" id="PF01668">
    <property type="entry name" value="SmpB"/>
    <property type="match status" value="1"/>
</dbReference>
<dbReference type="SUPFAM" id="SSF74982">
    <property type="entry name" value="Small protein B (SmpB)"/>
    <property type="match status" value="1"/>
</dbReference>
<dbReference type="PROSITE" id="PS01317">
    <property type="entry name" value="SSRP"/>
    <property type="match status" value="1"/>
</dbReference>
<organism>
    <name type="scientific">Alkaliphilus metalliredigens (strain QYMF)</name>
    <dbReference type="NCBI Taxonomy" id="293826"/>
    <lineage>
        <taxon>Bacteria</taxon>
        <taxon>Bacillati</taxon>
        <taxon>Bacillota</taxon>
        <taxon>Clostridia</taxon>
        <taxon>Peptostreptococcales</taxon>
        <taxon>Natronincolaceae</taxon>
        <taxon>Alkaliphilus</taxon>
    </lineage>
</organism>
<feature type="chain" id="PRO_0000331019" description="SsrA-binding protein">
    <location>
        <begin position="1"/>
        <end position="157"/>
    </location>
</feature>
<feature type="region of interest" description="Disordered" evidence="2">
    <location>
        <begin position="130"/>
        <end position="157"/>
    </location>
</feature>
<feature type="compositionally biased region" description="Basic and acidic residues" evidence="2">
    <location>
        <begin position="132"/>
        <end position="157"/>
    </location>
</feature>
<reference key="1">
    <citation type="journal article" date="2016" name="Genome Announc.">
        <title>Complete genome sequence of Alkaliphilus metalliredigens strain QYMF, an alkaliphilic and metal-reducing bacterium isolated from borax-contaminated leachate ponds.</title>
        <authorList>
            <person name="Hwang C."/>
            <person name="Copeland A."/>
            <person name="Lucas S."/>
            <person name="Lapidus A."/>
            <person name="Barry K."/>
            <person name="Detter J.C."/>
            <person name="Glavina Del Rio T."/>
            <person name="Hammon N."/>
            <person name="Israni S."/>
            <person name="Dalin E."/>
            <person name="Tice H."/>
            <person name="Pitluck S."/>
            <person name="Chertkov O."/>
            <person name="Brettin T."/>
            <person name="Bruce D."/>
            <person name="Han C."/>
            <person name="Schmutz J."/>
            <person name="Larimer F."/>
            <person name="Land M.L."/>
            <person name="Hauser L."/>
            <person name="Kyrpides N."/>
            <person name="Mikhailova N."/>
            <person name="Ye Q."/>
            <person name="Zhou J."/>
            <person name="Richardson P."/>
            <person name="Fields M.W."/>
        </authorList>
    </citation>
    <scope>NUCLEOTIDE SEQUENCE [LARGE SCALE GENOMIC DNA]</scope>
    <source>
        <strain>QYMF</strain>
    </source>
</reference>